<accession>B1YL70</accession>
<dbReference type="EC" id="3.1.-.-" evidence="1"/>
<dbReference type="EMBL" id="CP001022">
    <property type="protein sequence ID" value="ACB60302.1"/>
    <property type="molecule type" value="Genomic_DNA"/>
</dbReference>
<dbReference type="RefSeq" id="WP_012369726.1">
    <property type="nucleotide sequence ID" value="NC_010556.1"/>
</dbReference>
<dbReference type="SMR" id="B1YL70"/>
<dbReference type="STRING" id="262543.Exig_0822"/>
<dbReference type="KEGG" id="esi:Exig_0822"/>
<dbReference type="eggNOG" id="COG0319">
    <property type="taxonomic scope" value="Bacteria"/>
</dbReference>
<dbReference type="HOGENOM" id="CLU_106710_3_0_9"/>
<dbReference type="OrthoDB" id="9807740at2"/>
<dbReference type="Proteomes" id="UP000001681">
    <property type="component" value="Chromosome"/>
</dbReference>
<dbReference type="GO" id="GO:0005737">
    <property type="term" value="C:cytoplasm"/>
    <property type="evidence" value="ECO:0007669"/>
    <property type="project" value="UniProtKB-SubCell"/>
</dbReference>
<dbReference type="GO" id="GO:0004222">
    <property type="term" value="F:metalloendopeptidase activity"/>
    <property type="evidence" value="ECO:0007669"/>
    <property type="project" value="InterPro"/>
</dbReference>
<dbReference type="GO" id="GO:0004521">
    <property type="term" value="F:RNA endonuclease activity"/>
    <property type="evidence" value="ECO:0007669"/>
    <property type="project" value="UniProtKB-UniRule"/>
</dbReference>
<dbReference type="GO" id="GO:0008270">
    <property type="term" value="F:zinc ion binding"/>
    <property type="evidence" value="ECO:0007669"/>
    <property type="project" value="UniProtKB-UniRule"/>
</dbReference>
<dbReference type="GO" id="GO:0006364">
    <property type="term" value="P:rRNA processing"/>
    <property type="evidence" value="ECO:0007669"/>
    <property type="project" value="UniProtKB-UniRule"/>
</dbReference>
<dbReference type="Gene3D" id="3.40.390.30">
    <property type="entry name" value="Metalloproteases ('zincins'), catalytic domain"/>
    <property type="match status" value="1"/>
</dbReference>
<dbReference type="HAMAP" id="MF_00009">
    <property type="entry name" value="Endoribonucl_YbeY"/>
    <property type="match status" value="1"/>
</dbReference>
<dbReference type="InterPro" id="IPR023091">
    <property type="entry name" value="MetalPrtase_cat_dom_sf_prd"/>
</dbReference>
<dbReference type="InterPro" id="IPR002036">
    <property type="entry name" value="YbeY"/>
</dbReference>
<dbReference type="InterPro" id="IPR020549">
    <property type="entry name" value="YbeY_CS"/>
</dbReference>
<dbReference type="NCBIfam" id="TIGR00043">
    <property type="entry name" value="rRNA maturation RNase YbeY"/>
    <property type="match status" value="1"/>
</dbReference>
<dbReference type="PANTHER" id="PTHR46986">
    <property type="entry name" value="ENDORIBONUCLEASE YBEY, CHLOROPLASTIC"/>
    <property type="match status" value="1"/>
</dbReference>
<dbReference type="PANTHER" id="PTHR46986:SF1">
    <property type="entry name" value="ENDORIBONUCLEASE YBEY, CHLOROPLASTIC"/>
    <property type="match status" value="1"/>
</dbReference>
<dbReference type="Pfam" id="PF02130">
    <property type="entry name" value="YbeY"/>
    <property type="match status" value="1"/>
</dbReference>
<dbReference type="SUPFAM" id="SSF55486">
    <property type="entry name" value="Metalloproteases ('zincins'), catalytic domain"/>
    <property type="match status" value="1"/>
</dbReference>
<dbReference type="PROSITE" id="PS01306">
    <property type="entry name" value="UPF0054"/>
    <property type="match status" value="1"/>
</dbReference>
<comment type="function">
    <text evidence="1">Single strand-specific metallo-endoribonuclease involved in late-stage 70S ribosome quality control and in maturation of the 3' terminus of the 16S rRNA.</text>
</comment>
<comment type="cofactor">
    <cofactor evidence="1">
        <name>Zn(2+)</name>
        <dbReference type="ChEBI" id="CHEBI:29105"/>
    </cofactor>
    <text evidence="1">Binds 1 zinc ion.</text>
</comment>
<comment type="subcellular location">
    <subcellularLocation>
        <location evidence="1">Cytoplasm</location>
    </subcellularLocation>
</comment>
<comment type="similarity">
    <text evidence="1">Belongs to the endoribonuclease YbeY family.</text>
</comment>
<reference key="1">
    <citation type="submission" date="2008-04" db="EMBL/GenBank/DDBJ databases">
        <title>Complete sequence of chromosome of Exiguobacterium sibiricum 255-15.</title>
        <authorList>
            <consortium name="US DOE Joint Genome Institute"/>
            <person name="Copeland A."/>
            <person name="Lucas S."/>
            <person name="Lapidus A."/>
            <person name="Glavina del Rio T."/>
            <person name="Dalin E."/>
            <person name="Tice H."/>
            <person name="Bruce D."/>
            <person name="Goodwin L."/>
            <person name="Pitluck S."/>
            <person name="Kiss H."/>
            <person name="Chertkov O."/>
            <person name="Monk C."/>
            <person name="Brettin T."/>
            <person name="Detter J.C."/>
            <person name="Han C."/>
            <person name="Kuske C.R."/>
            <person name="Schmutz J."/>
            <person name="Larimer F."/>
            <person name="Land M."/>
            <person name="Hauser L."/>
            <person name="Kyrpides N."/>
            <person name="Mikhailova N."/>
            <person name="Vishnivetskaya T."/>
            <person name="Rodrigues D.F."/>
            <person name="Gilichinsky D."/>
            <person name="Tiedje J."/>
            <person name="Richardson P."/>
        </authorList>
    </citation>
    <scope>NUCLEOTIDE SEQUENCE [LARGE SCALE GENOMIC DNA]</scope>
    <source>
        <strain>DSM 17290 / CCUG 55495 / CIP 109462 / JCM 13490 / 255-15</strain>
    </source>
</reference>
<proteinExistence type="inferred from homology"/>
<keyword id="KW-0963">Cytoplasm</keyword>
<keyword id="KW-0255">Endonuclease</keyword>
<keyword id="KW-0378">Hydrolase</keyword>
<keyword id="KW-0479">Metal-binding</keyword>
<keyword id="KW-0540">Nuclease</keyword>
<keyword id="KW-1185">Reference proteome</keyword>
<keyword id="KW-0690">Ribosome biogenesis</keyword>
<keyword id="KW-0698">rRNA processing</keyword>
<keyword id="KW-0862">Zinc</keyword>
<name>YBEY_EXIS2</name>
<evidence type="ECO:0000255" key="1">
    <source>
        <dbReference type="HAMAP-Rule" id="MF_00009"/>
    </source>
</evidence>
<sequence length="158" mass="18377">MNIYMTDEGKLLTEEQLKLVEAILVYTATEEKIEANSELSVTFVTNDEIQQINREWRGKDQATDVISFAMDELGEDEIDFELLEDEPVVLGDLIISVERCREQAAEYGNHFERELGFLAVHGFLHLLGYDHIEKADEDIMTKRQEEILHHFELYRGKL</sequence>
<organism>
    <name type="scientific">Exiguobacterium sibiricum (strain DSM 17290 / CCUG 55495 / CIP 109462 / JCM 13490 / 255-15)</name>
    <dbReference type="NCBI Taxonomy" id="262543"/>
    <lineage>
        <taxon>Bacteria</taxon>
        <taxon>Bacillati</taxon>
        <taxon>Bacillota</taxon>
        <taxon>Bacilli</taxon>
        <taxon>Bacillales</taxon>
        <taxon>Bacillales Family XII. Incertae Sedis</taxon>
        <taxon>Exiguobacterium</taxon>
    </lineage>
</organism>
<gene>
    <name evidence="1" type="primary">ybeY</name>
    <name type="ordered locus">Exig_0822</name>
</gene>
<protein>
    <recommendedName>
        <fullName evidence="1">Endoribonuclease YbeY</fullName>
        <ecNumber evidence="1">3.1.-.-</ecNumber>
    </recommendedName>
</protein>
<feature type="chain" id="PRO_1000089176" description="Endoribonuclease YbeY">
    <location>
        <begin position="1"/>
        <end position="158"/>
    </location>
</feature>
<feature type="binding site" evidence="1">
    <location>
        <position position="121"/>
    </location>
    <ligand>
        <name>Zn(2+)</name>
        <dbReference type="ChEBI" id="CHEBI:29105"/>
        <note>catalytic</note>
    </ligand>
</feature>
<feature type="binding site" evidence="1">
    <location>
        <position position="125"/>
    </location>
    <ligand>
        <name>Zn(2+)</name>
        <dbReference type="ChEBI" id="CHEBI:29105"/>
        <note>catalytic</note>
    </ligand>
</feature>
<feature type="binding site" evidence="1">
    <location>
        <position position="131"/>
    </location>
    <ligand>
        <name>Zn(2+)</name>
        <dbReference type="ChEBI" id="CHEBI:29105"/>
        <note>catalytic</note>
    </ligand>
</feature>